<dbReference type="EMBL" id="AE016822">
    <property type="protein sequence ID" value="AAT89615.1"/>
    <property type="molecule type" value="Genomic_DNA"/>
</dbReference>
<dbReference type="RefSeq" id="WP_011186602.1">
    <property type="nucleotide sequence ID" value="NC_006087.1"/>
</dbReference>
<dbReference type="SMR" id="Q6ADC9"/>
<dbReference type="STRING" id="281090.Lxx18840"/>
<dbReference type="KEGG" id="lxx:Lxx18840"/>
<dbReference type="eggNOG" id="COG0292">
    <property type="taxonomic scope" value="Bacteria"/>
</dbReference>
<dbReference type="HOGENOM" id="CLU_123265_0_0_11"/>
<dbReference type="Proteomes" id="UP000001306">
    <property type="component" value="Chromosome"/>
</dbReference>
<dbReference type="GO" id="GO:1990904">
    <property type="term" value="C:ribonucleoprotein complex"/>
    <property type="evidence" value="ECO:0007669"/>
    <property type="project" value="UniProtKB-KW"/>
</dbReference>
<dbReference type="GO" id="GO:0005840">
    <property type="term" value="C:ribosome"/>
    <property type="evidence" value="ECO:0007669"/>
    <property type="project" value="UniProtKB-KW"/>
</dbReference>
<dbReference type="GO" id="GO:0019843">
    <property type="term" value="F:rRNA binding"/>
    <property type="evidence" value="ECO:0007669"/>
    <property type="project" value="UniProtKB-UniRule"/>
</dbReference>
<dbReference type="GO" id="GO:0003735">
    <property type="term" value="F:structural constituent of ribosome"/>
    <property type="evidence" value="ECO:0007669"/>
    <property type="project" value="InterPro"/>
</dbReference>
<dbReference type="GO" id="GO:0000027">
    <property type="term" value="P:ribosomal large subunit assembly"/>
    <property type="evidence" value="ECO:0007669"/>
    <property type="project" value="UniProtKB-UniRule"/>
</dbReference>
<dbReference type="GO" id="GO:0006412">
    <property type="term" value="P:translation"/>
    <property type="evidence" value="ECO:0007669"/>
    <property type="project" value="InterPro"/>
</dbReference>
<dbReference type="CDD" id="cd07026">
    <property type="entry name" value="Ribosomal_L20"/>
    <property type="match status" value="1"/>
</dbReference>
<dbReference type="FunFam" id="1.10.1900.20:FF:000001">
    <property type="entry name" value="50S ribosomal protein L20"/>
    <property type="match status" value="1"/>
</dbReference>
<dbReference type="Gene3D" id="6.10.160.10">
    <property type="match status" value="1"/>
</dbReference>
<dbReference type="Gene3D" id="1.10.1900.20">
    <property type="entry name" value="Ribosomal protein L20"/>
    <property type="match status" value="1"/>
</dbReference>
<dbReference type="HAMAP" id="MF_00382">
    <property type="entry name" value="Ribosomal_bL20"/>
    <property type="match status" value="1"/>
</dbReference>
<dbReference type="InterPro" id="IPR005813">
    <property type="entry name" value="Ribosomal_bL20"/>
</dbReference>
<dbReference type="InterPro" id="IPR049946">
    <property type="entry name" value="RIBOSOMAL_L20_CS"/>
</dbReference>
<dbReference type="InterPro" id="IPR035566">
    <property type="entry name" value="Ribosomal_protein_bL20_C"/>
</dbReference>
<dbReference type="NCBIfam" id="TIGR01032">
    <property type="entry name" value="rplT_bact"/>
    <property type="match status" value="1"/>
</dbReference>
<dbReference type="PANTHER" id="PTHR10986">
    <property type="entry name" value="39S RIBOSOMAL PROTEIN L20"/>
    <property type="match status" value="1"/>
</dbReference>
<dbReference type="Pfam" id="PF00453">
    <property type="entry name" value="Ribosomal_L20"/>
    <property type="match status" value="1"/>
</dbReference>
<dbReference type="PRINTS" id="PR00062">
    <property type="entry name" value="RIBOSOMALL20"/>
</dbReference>
<dbReference type="SUPFAM" id="SSF74731">
    <property type="entry name" value="Ribosomal protein L20"/>
    <property type="match status" value="1"/>
</dbReference>
<dbReference type="PROSITE" id="PS00937">
    <property type="entry name" value="RIBOSOMAL_L20"/>
    <property type="match status" value="1"/>
</dbReference>
<keyword id="KW-1185">Reference proteome</keyword>
<keyword id="KW-0687">Ribonucleoprotein</keyword>
<keyword id="KW-0689">Ribosomal protein</keyword>
<keyword id="KW-0694">RNA-binding</keyword>
<keyword id="KW-0699">rRNA-binding</keyword>
<gene>
    <name evidence="1" type="primary">rplT</name>
    <name type="ordered locus">Lxx18840</name>
</gene>
<reference key="1">
    <citation type="journal article" date="2004" name="Mol. Plant Microbe Interact.">
        <title>The genome sequence of the Gram-positive sugarcane pathogen Leifsonia xyli subsp. xyli.</title>
        <authorList>
            <person name="Monteiro-Vitorello C.B."/>
            <person name="Camargo L.E.A."/>
            <person name="Van Sluys M.A."/>
            <person name="Kitajima J.P."/>
            <person name="Truffi D."/>
            <person name="do Amaral A.M."/>
            <person name="Harakava R."/>
            <person name="de Oliveira J.C.F."/>
            <person name="Wood D."/>
            <person name="de Oliveira M.C."/>
            <person name="Miyaki C.Y."/>
            <person name="Takita M.A."/>
            <person name="da Silva A.C.R."/>
            <person name="Furlan L.R."/>
            <person name="Carraro D.M."/>
            <person name="Camarotte G."/>
            <person name="Almeida N.F. Jr."/>
            <person name="Carrer H."/>
            <person name="Coutinho L.L."/>
            <person name="El-Dorry H.A."/>
            <person name="Ferro M.I.T."/>
            <person name="Gagliardi P.R."/>
            <person name="Giglioti E."/>
            <person name="Goldman M.H.S."/>
            <person name="Goldman G.H."/>
            <person name="Kimura E.T."/>
            <person name="Ferro E.S."/>
            <person name="Kuramae E.E."/>
            <person name="Lemos E.G.M."/>
            <person name="Lemos M.V.F."/>
            <person name="Mauro S.M.Z."/>
            <person name="Machado M.A."/>
            <person name="Marino C.L."/>
            <person name="Menck C.F."/>
            <person name="Nunes L.R."/>
            <person name="Oliveira R.C."/>
            <person name="Pereira G.G."/>
            <person name="Siqueira W."/>
            <person name="de Souza A.A."/>
            <person name="Tsai S.M."/>
            <person name="Zanca A.S."/>
            <person name="Simpson A.J.G."/>
            <person name="Brumbley S.M."/>
            <person name="Setubal J.C."/>
        </authorList>
    </citation>
    <scope>NUCLEOTIDE SEQUENCE [LARGE SCALE GENOMIC DNA]</scope>
    <source>
        <strain>CTCB07</strain>
    </source>
</reference>
<feature type="chain" id="PRO_0000177171" description="Large ribosomal subunit protein bL20">
    <location>
        <begin position="1"/>
        <end position="130"/>
    </location>
</feature>
<comment type="function">
    <text evidence="1">Binds directly to 23S ribosomal RNA and is necessary for the in vitro assembly process of the 50S ribosomal subunit. It is not involved in the protein synthesizing functions of that subunit.</text>
</comment>
<comment type="similarity">
    <text evidence="1">Belongs to the bacterial ribosomal protein bL20 family.</text>
</comment>
<organism>
    <name type="scientific">Leifsonia xyli subsp. xyli (strain CTCB07)</name>
    <dbReference type="NCBI Taxonomy" id="281090"/>
    <lineage>
        <taxon>Bacteria</taxon>
        <taxon>Bacillati</taxon>
        <taxon>Actinomycetota</taxon>
        <taxon>Actinomycetes</taxon>
        <taxon>Micrococcales</taxon>
        <taxon>Microbacteriaceae</taxon>
        <taxon>Leifsonia</taxon>
    </lineage>
</organism>
<evidence type="ECO:0000255" key="1">
    <source>
        <dbReference type="HAMAP-Rule" id="MF_00382"/>
    </source>
</evidence>
<evidence type="ECO:0000305" key="2"/>
<accession>Q6ADC9</accession>
<sequence length="130" mass="14719">MARVKRAVNAHKKRRVILERAEGYRGQRSRLYRKAKEQVTHSLVYAYRDRRQKKGDFRRLWIQRINAASRANGLTYNRFIQGLGLAGVEVDRRILAELAVNEPATFTALVETAKKALPADTSAPKADAAA</sequence>
<proteinExistence type="inferred from homology"/>
<protein>
    <recommendedName>
        <fullName evidence="1">Large ribosomal subunit protein bL20</fullName>
    </recommendedName>
    <alternativeName>
        <fullName evidence="2">50S ribosomal protein L20</fullName>
    </alternativeName>
</protein>
<name>RL20_LEIXX</name>